<proteinExistence type="evidence at protein level"/>
<dbReference type="EMBL" id="L13303">
    <property type="protein sequence ID" value="AAA02861.1"/>
    <property type="molecule type" value="Genomic_DNA"/>
</dbReference>
<dbReference type="EMBL" id="Z15133">
    <property type="protein sequence ID" value="CAA78836.1"/>
    <property type="molecule type" value="Genomic_DNA"/>
</dbReference>
<dbReference type="EMBL" id="Z23260">
    <property type="protein sequence ID" value="CAA80782.1"/>
    <property type="molecule type" value="Genomic_DNA"/>
</dbReference>
<dbReference type="EMBL" id="FJ423446">
    <property type="protein sequence ID" value="ACJ50118.1"/>
    <property type="molecule type" value="Genomic_DNA"/>
</dbReference>
<dbReference type="EMBL" id="BK000554">
    <property type="protein sequence ID" value="DAA00930.1"/>
    <property type="molecule type" value="Genomic_DNA"/>
</dbReference>
<dbReference type="PIR" id="S01125">
    <property type="entry name" value="S01125"/>
</dbReference>
<dbReference type="PIR" id="S35147">
    <property type="entry name" value="S35147"/>
</dbReference>
<dbReference type="RefSeq" id="NP_958385.1">
    <property type="nucleotide sequence ID" value="NC_005353.1"/>
</dbReference>
<dbReference type="PDB" id="6KAC">
    <property type="method" value="EM"/>
    <property type="resolution" value="2.70 A"/>
    <property type="chains" value="H/h=1-88"/>
</dbReference>
<dbReference type="PDB" id="6KAD">
    <property type="method" value="EM"/>
    <property type="resolution" value="3.40 A"/>
    <property type="chains" value="H/h=1-88"/>
</dbReference>
<dbReference type="PDB" id="6KAF">
    <property type="method" value="EM"/>
    <property type="resolution" value="3.73 A"/>
    <property type="chains" value="H/h=1-88"/>
</dbReference>
<dbReference type="PDB" id="8KDE">
    <property type="method" value="EM"/>
    <property type="resolution" value="2.60 A"/>
    <property type="chains" value="H=1-88"/>
</dbReference>
<dbReference type="PDB" id="8R2I">
    <property type="method" value="EM"/>
    <property type="resolution" value="2.90 A"/>
    <property type="chains" value="H=19-83"/>
</dbReference>
<dbReference type="PDB" id="8ZEE">
    <property type="method" value="EM"/>
    <property type="resolution" value="2.90 A"/>
    <property type="chains" value="H=1-88"/>
</dbReference>
<dbReference type="PDBsum" id="6KAC"/>
<dbReference type="PDBsum" id="6KAD"/>
<dbReference type="PDBsum" id="6KAF"/>
<dbReference type="PDBsum" id="8KDE"/>
<dbReference type="PDBsum" id="8R2I"/>
<dbReference type="PDBsum" id="8ZEE"/>
<dbReference type="EMDB" id="EMD-18848"/>
<dbReference type="EMDB" id="EMD-37133"/>
<dbReference type="EMDB" id="EMD-60026"/>
<dbReference type="EMDB" id="EMD-9955"/>
<dbReference type="EMDB" id="EMD-9956"/>
<dbReference type="EMDB" id="EMD-9957"/>
<dbReference type="SMR" id="P22666"/>
<dbReference type="FunCoup" id="P22666">
    <property type="interactions" value="250"/>
</dbReference>
<dbReference type="STRING" id="3055.P22666"/>
<dbReference type="PaxDb" id="3055-DAA00930"/>
<dbReference type="GeneID" id="2717030"/>
<dbReference type="KEGG" id="cre:ChreCp029"/>
<dbReference type="eggNOG" id="ENOG502S8Y7">
    <property type="taxonomic scope" value="Eukaryota"/>
</dbReference>
<dbReference type="HOGENOM" id="CLU_190203_0_0_1"/>
<dbReference type="InParanoid" id="P22666"/>
<dbReference type="BioCyc" id="CHLAMY:CHRECP029-MONOMER"/>
<dbReference type="BioCyc" id="MetaCyc:CHRECP029-MONOMER"/>
<dbReference type="Proteomes" id="UP000006906">
    <property type="component" value="Chloroplast"/>
</dbReference>
<dbReference type="GO" id="GO:0009535">
    <property type="term" value="C:chloroplast thylakoid membrane"/>
    <property type="evidence" value="ECO:0007669"/>
    <property type="project" value="UniProtKB-SubCell"/>
</dbReference>
<dbReference type="GO" id="GO:0009523">
    <property type="term" value="C:photosystem II"/>
    <property type="evidence" value="ECO:0007669"/>
    <property type="project" value="UniProtKB-KW"/>
</dbReference>
<dbReference type="GO" id="GO:0042301">
    <property type="term" value="F:phosphate ion binding"/>
    <property type="evidence" value="ECO:0007669"/>
    <property type="project" value="InterPro"/>
</dbReference>
<dbReference type="GO" id="GO:0015979">
    <property type="term" value="P:photosynthesis"/>
    <property type="evidence" value="ECO:0007669"/>
    <property type="project" value="UniProtKB-UniRule"/>
</dbReference>
<dbReference type="GO" id="GO:0050821">
    <property type="term" value="P:protein stabilization"/>
    <property type="evidence" value="ECO:0007669"/>
    <property type="project" value="InterPro"/>
</dbReference>
<dbReference type="Gene3D" id="1.20.5.880">
    <property type="entry name" value="Photosystem II reaction center protein H"/>
    <property type="match status" value="1"/>
</dbReference>
<dbReference type="HAMAP" id="MF_00752">
    <property type="entry name" value="PSII_PsbH"/>
    <property type="match status" value="1"/>
</dbReference>
<dbReference type="InterPro" id="IPR001056">
    <property type="entry name" value="PSII_PsbH"/>
</dbReference>
<dbReference type="InterPro" id="IPR036863">
    <property type="entry name" value="PSII_PsbH_sf"/>
</dbReference>
<dbReference type="NCBIfam" id="NF002728">
    <property type="entry name" value="PRK02624.1"/>
    <property type="match status" value="1"/>
</dbReference>
<dbReference type="PANTHER" id="PTHR34469">
    <property type="entry name" value="PHOTOSYSTEM II REACTION CENTER PROTEIN H"/>
    <property type="match status" value="1"/>
</dbReference>
<dbReference type="PANTHER" id="PTHR34469:SF4">
    <property type="entry name" value="PHOTOSYSTEM II REACTION CENTER PROTEIN H"/>
    <property type="match status" value="1"/>
</dbReference>
<dbReference type="Pfam" id="PF00737">
    <property type="entry name" value="PsbH"/>
    <property type="match status" value="1"/>
</dbReference>
<dbReference type="SUPFAM" id="SSF161025">
    <property type="entry name" value="Photosystem II 10 kDa phosphoprotein PsbH"/>
    <property type="match status" value="1"/>
</dbReference>
<sequence>MATGTSKAKPSKVNSDFQEPGLVTPLGTLLRPLNSEAGKVLPGWGTTVLMAVFILLFAAFLLIILEIYNSSLILDDVSMSWETLAKVS</sequence>
<protein>
    <recommendedName>
        <fullName evidence="1">Photosystem II reaction center protein H</fullName>
        <shortName evidence="1">PSII-H</shortName>
    </recommendedName>
    <alternativeName>
        <fullName evidence="6">Photosystem II 8 kDa phosphoprotein</fullName>
    </alternativeName>
</protein>
<organism>
    <name type="scientific">Chlamydomonas reinhardtii</name>
    <name type="common">Chlamydomonas smithii</name>
    <dbReference type="NCBI Taxonomy" id="3055"/>
    <lineage>
        <taxon>Eukaryota</taxon>
        <taxon>Viridiplantae</taxon>
        <taxon>Chlorophyta</taxon>
        <taxon>core chlorophytes</taxon>
        <taxon>Chlorophyceae</taxon>
        <taxon>CS clade</taxon>
        <taxon>Chlamydomonadales</taxon>
        <taxon>Chlamydomonadaceae</taxon>
        <taxon>Chlamydomonas</taxon>
    </lineage>
</organism>
<name>PSBH_CHLRE</name>
<feature type="initiator methionine" description="Removed" evidence="5">
    <location>
        <position position="1"/>
    </location>
</feature>
<feature type="chain" id="PRO_0000070502" description="Photosystem II reaction center protein H">
    <location>
        <begin position="2"/>
        <end position="88"/>
    </location>
</feature>
<feature type="transmembrane region" description="Helical" evidence="1">
    <location>
        <begin position="48"/>
        <end position="68"/>
    </location>
</feature>
<feature type="modified residue" description="Phosphothreonine" evidence="5">
    <location>
        <position position="3"/>
    </location>
</feature>
<feature type="mutagenesis site" description="No visible phenotype." evidence="4">
    <original>T</original>
    <variation>A</variation>
    <location>
        <position position="3"/>
    </location>
</feature>
<feature type="turn" evidence="9">
    <location>
        <begin position="15"/>
        <end position="18"/>
    </location>
</feature>
<feature type="helix" evidence="9">
    <location>
        <begin position="25"/>
        <end position="30"/>
    </location>
</feature>
<feature type="helix" evidence="9">
    <location>
        <begin position="31"/>
        <end position="34"/>
    </location>
</feature>
<feature type="strand" evidence="8">
    <location>
        <begin position="39"/>
        <end position="42"/>
    </location>
</feature>
<feature type="turn" evidence="9">
    <location>
        <begin position="43"/>
        <end position="46"/>
    </location>
</feature>
<feature type="helix" evidence="9">
    <location>
        <begin position="47"/>
        <end position="68"/>
    </location>
</feature>
<feature type="helix" evidence="9">
    <location>
        <begin position="81"/>
        <end position="84"/>
    </location>
</feature>
<reference key="1">
    <citation type="journal article" date="1993" name="Plant Mol. Biol.">
        <title>The psbB gene cluster of the Chlamydomonas reinhardtii chloroplast: sequence and transcriptional analyses of psbN and psbH.</title>
        <authorList>
            <person name="Johnson C.H."/>
            <person name="Schmidt G.W."/>
        </authorList>
    </citation>
    <scope>NUCLEOTIDE SEQUENCE [GENOMIC DNA]</scope>
    <source>
        <strain>137c / CC-125</strain>
    </source>
</reference>
<reference key="2">
    <citation type="submission" date="1993-07" db="EMBL/GenBank/DDBJ databases">
        <title>Characterisation of the Chlamydomonas reinhardtii psbH gene encoding the 9.3 kDa phosphoprotein of photosystem II.</title>
        <authorList>
            <person name="O'Connor H.E."/>
            <person name="Nugent J.H."/>
            <person name="Purton S."/>
        </authorList>
    </citation>
    <scope>NUCLEOTIDE SEQUENCE [GENOMIC DNA]</scope>
    <source>
        <strain>cw15</strain>
    </source>
</reference>
<reference key="3">
    <citation type="journal article" date="2009" name="BMC Evol. Biol.">
        <title>Nucleotide diversity of the Chlamydomonas reinhardtii plastid genome: addressing the mutational-hazard hypothesis.</title>
        <authorList>
            <person name="Smith D.R."/>
            <person name="Lee R.W."/>
        </authorList>
    </citation>
    <scope>NUCLEOTIDE SEQUENCE [LARGE SCALE GENOMIC DNA]</scope>
    <source>
        <strain>CC-503</strain>
    </source>
</reference>
<reference key="4">
    <citation type="journal article" date="1988" name="FEBS Lett.">
        <title>N-terminal sequence analysis of the 8 kDa protein in Chlamydomonas reinhardii. Localization of the phosphothreonine.</title>
        <authorList>
            <person name="Dedner N."/>
            <person name="Meyer H.E."/>
            <person name="Ashton C."/>
            <person name="Wildner G.F."/>
        </authorList>
    </citation>
    <scope>PROTEIN SEQUENCE OF 2-43</scope>
    <scope>PHOSPHORYLATION AT THR-3</scope>
    <scope>SUBCELLULAR LOCATION</scope>
</reference>
<reference key="5">
    <citation type="journal article" date="1991" name="J. Biol. Chem.">
        <title>Photosystem II particles from Chlamydomonas reinhardtii. Purification, molecular weight, small subunit composition, and protein phosphorylation.</title>
        <authorList>
            <person name="de Vitry C."/>
            <person name="Diner B.A."/>
            <person name="Popo J.-L."/>
        </authorList>
    </citation>
    <scope>SUBUNIT</scope>
    <scope>SUBCELLULAR LOCATION</scope>
    <scope>PHOSPHORYLATION</scope>
</reference>
<reference key="6">
    <citation type="journal article" date="1997" name="Plant Physiol.">
        <title>Requirement for the H phosphoprotein in photosystem II of Chlamydomonas reinhardtii.</title>
        <authorList>
            <person name="Summer E.J."/>
            <person name="Schmid V.H."/>
            <person name="Bruns B.U."/>
            <person name="Schmidt G.W."/>
        </authorList>
    </citation>
    <scope>FUNCTION</scope>
    <scope>SUBUNIT</scope>
    <scope>SUBCELLULAR LOCATION</scope>
    <scope>INDUCTION</scope>
    <scope>DISRUPTION PHENOTYPE</scope>
    <source>
        <strain>137c / CC-125</strain>
    </source>
</reference>
<reference key="7">
    <citation type="journal article" date="1998" name="Biochim. Biophys. Acta">
        <title>The 9-kDa phosphoprotein of photosystem II. Generation and characterisation of Chlamydomonas mutants lacking PSII-H and a site-directed mutant lacking the phosphorylation site.</title>
        <authorList>
            <person name="O'Connor H.E."/>
            <person name="Ruffle S.V."/>
            <person name="Cain A.J."/>
            <person name="Deak Z."/>
            <person name="Vass I."/>
            <person name="Nugent J.H."/>
            <person name="Purton S."/>
        </authorList>
    </citation>
    <scope>FUNCTION</scope>
    <scope>DISRUPTION PHENOTYPE</scope>
    <scope>MUTAGENESIS OF THR-3</scope>
    <source>
        <strain>2137</strain>
    </source>
</reference>
<reference key="8">
    <citation type="journal article" date="2002" name="Plant Cell">
        <title>The Chlamydomonas reinhardtii plastid chromosome: islands of genes in a sea of repeats.</title>
        <authorList>
            <person name="Maul J.E."/>
            <person name="Lilly J.W."/>
            <person name="Cui L."/>
            <person name="dePamphilis C.W."/>
            <person name="Miller W."/>
            <person name="Harris E.H."/>
            <person name="Stern D.B."/>
        </authorList>
    </citation>
    <scope>IDENTIFICATION</scope>
    <scope>COMPLETE PLASTID GENOME</scope>
</reference>
<evidence type="ECO:0000255" key="1">
    <source>
        <dbReference type="HAMAP-Rule" id="MF_00752"/>
    </source>
</evidence>
<evidence type="ECO:0000269" key="2">
    <source>
    </source>
</evidence>
<evidence type="ECO:0000269" key="3">
    <source>
    </source>
</evidence>
<evidence type="ECO:0000269" key="4">
    <source>
    </source>
</evidence>
<evidence type="ECO:0000269" key="5">
    <source ref="4"/>
</evidence>
<evidence type="ECO:0000303" key="6">
    <source ref="4"/>
</evidence>
<evidence type="ECO:0000305" key="7">
    <source>
    </source>
</evidence>
<evidence type="ECO:0007829" key="8">
    <source>
        <dbReference type="PDB" id="6KAC"/>
    </source>
</evidence>
<evidence type="ECO:0007829" key="9">
    <source>
        <dbReference type="PDB" id="8KDE"/>
    </source>
</evidence>
<geneLocation type="chloroplast"/>
<comment type="function">
    <text evidence="1 3 4">One of the components of the core complex of photosystem II (PSII), required for its stability and/or assembly, possibly playing a role in dimerization (PubMed:9112780, PubMed:9554956). PSII is a light-driven water:plastoquinone oxidoreductase that uses light energy to abstract electrons from H(2)O, generating O(2) and a proton gradient subsequently used for ATP formation. It consists of a core antenna complex that captures photons, and an electron transfer chain that converts photonic excitation into a charge separation.</text>
</comment>
<comment type="subunit">
    <text evidence="1 2 3">PSII is composed of 1 copy each of membrane proteins PsbA, PsbB, PsbC, PsbD, PsbE, PsbF, PsbH, PsbI, PsbJ, PsbK, PsbL, PsbM, PsbT, PsbX, PsbY, PsbZ, Psb30/Ycf12, at least 3 peripheral proteins of the oxygen-evolving complex and a large number of cofactors. It forms dimeric complexes.</text>
</comment>
<comment type="subcellular location">
    <subcellularLocation>
        <location evidence="1 2 3 5">Plastid</location>
        <location evidence="1 2 3 5">Chloroplast thylakoid membrane</location>
        <topology evidence="1 7">Single-pass membrane protein</topology>
    </subcellularLocation>
</comment>
<comment type="induction">
    <text evidence="3">A monocistronic transcript that is strongly expressed.</text>
</comment>
<comment type="PTM">
    <text evidence="2 5">Phosphorylation is a light-dependent reaction catalyzed by a membrane-bound kinase (Ref.4). In vitro phosphorylation is incomplete (PubMed:1885590).</text>
</comment>
<comment type="disruption phenotype">
    <text evidence="3 4">Loss of photosynthetic growth, cells grow normally on a reduced carbon source. While all other PSII subunits are synthesized and are inserted into thylakoids, they do not accumulate.</text>
</comment>
<comment type="similarity">
    <text evidence="1">Belongs to the PsbH family.</text>
</comment>
<gene>
    <name evidence="1" type="primary">psbH</name>
</gene>
<keyword id="KW-0002">3D-structure</keyword>
<keyword id="KW-0150">Chloroplast</keyword>
<keyword id="KW-0903">Direct protein sequencing</keyword>
<keyword id="KW-0472">Membrane</keyword>
<keyword id="KW-0597">Phosphoprotein</keyword>
<keyword id="KW-0602">Photosynthesis</keyword>
<keyword id="KW-0604">Photosystem II</keyword>
<keyword id="KW-0934">Plastid</keyword>
<keyword id="KW-1185">Reference proteome</keyword>
<keyword id="KW-0793">Thylakoid</keyword>
<keyword id="KW-0812">Transmembrane</keyword>
<keyword id="KW-1133">Transmembrane helix</keyword>
<accession>P22666</accession>
<accession>B7U1H1</accession>